<evidence type="ECO:0000250" key="1"/>
<evidence type="ECO:0000305" key="2"/>
<gene>
    <name type="primary">tpiA</name>
    <name type="ORF">AO090120000493</name>
</gene>
<reference key="1">
    <citation type="submission" date="1999-09" db="EMBL/GenBank/DDBJ databases">
        <title>Molecular cloning and characterization of glycolytic gene from Aspergillus oryzae.</title>
        <authorList>
            <person name="Nakajima K."/>
            <person name="Kunihiro S."/>
            <person name="Sano M."/>
            <person name="Eto S."/>
            <person name="Machida M."/>
        </authorList>
    </citation>
    <scope>NUCLEOTIDE SEQUENCE [MRNA]</scope>
    <source>
        <strain>ATCC 42149 / RIB 40</strain>
    </source>
</reference>
<reference key="2">
    <citation type="journal article" date="2005" name="Nature">
        <title>Genome sequencing and analysis of Aspergillus oryzae.</title>
        <authorList>
            <person name="Machida M."/>
            <person name="Asai K."/>
            <person name="Sano M."/>
            <person name="Tanaka T."/>
            <person name="Kumagai T."/>
            <person name="Terai G."/>
            <person name="Kusumoto K."/>
            <person name="Arima T."/>
            <person name="Akita O."/>
            <person name="Kashiwagi Y."/>
            <person name="Abe K."/>
            <person name="Gomi K."/>
            <person name="Horiuchi H."/>
            <person name="Kitamoto K."/>
            <person name="Kobayashi T."/>
            <person name="Takeuchi M."/>
            <person name="Denning D.W."/>
            <person name="Galagan J.E."/>
            <person name="Nierman W.C."/>
            <person name="Yu J."/>
            <person name="Archer D.B."/>
            <person name="Bennett J.W."/>
            <person name="Bhatnagar D."/>
            <person name="Cleveland T.E."/>
            <person name="Fedorova N.D."/>
            <person name="Gotoh O."/>
            <person name="Horikawa H."/>
            <person name="Hosoyama A."/>
            <person name="Ichinomiya M."/>
            <person name="Igarashi R."/>
            <person name="Iwashita K."/>
            <person name="Juvvadi P.R."/>
            <person name="Kato M."/>
            <person name="Kato Y."/>
            <person name="Kin T."/>
            <person name="Kokubun A."/>
            <person name="Maeda H."/>
            <person name="Maeyama N."/>
            <person name="Maruyama J."/>
            <person name="Nagasaki H."/>
            <person name="Nakajima T."/>
            <person name="Oda K."/>
            <person name="Okada K."/>
            <person name="Paulsen I."/>
            <person name="Sakamoto K."/>
            <person name="Sawano T."/>
            <person name="Takahashi M."/>
            <person name="Takase K."/>
            <person name="Terabayashi Y."/>
            <person name="Wortman J.R."/>
            <person name="Yamada O."/>
            <person name="Yamagata Y."/>
            <person name="Anazawa H."/>
            <person name="Hata Y."/>
            <person name="Koide Y."/>
            <person name="Komori T."/>
            <person name="Koyama Y."/>
            <person name="Minetoki T."/>
            <person name="Suharnan S."/>
            <person name="Tanaka A."/>
            <person name="Isono K."/>
            <person name="Kuhara S."/>
            <person name="Ogasawara N."/>
            <person name="Kikuchi H."/>
        </authorList>
    </citation>
    <scope>NUCLEOTIDE SEQUENCE [LARGE SCALE GENOMIC DNA]</scope>
    <source>
        <strain>ATCC 42149 / RIB 40</strain>
    </source>
</reference>
<feature type="chain" id="PRO_0000090157" description="Triosephosphate isomerase">
    <location>
        <begin position="1"/>
        <end position="251"/>
    </location>
</feature>
<feature type="active site" description="Electrophile" evidence="1">
    <location>
        <position position="96"/>
    </location>
</feature>
<feature type="active site" description="Proton acceptor" evidence="1">
    <location>
        <position position="168"/>
    </location>
</feature>
<feature type="binding site" evidence="1">
    <location>
        <position position="10"/>
    </location>
    <ligand>
        <name>substrate</name>
    </ligand>
</feature>
<feature type="binding site" evidence="1">
    <location>
        <position position="12"/>
    </location>
    <ligand>
        <name>substrate</name>
    </ligand>
</feature>
<name>TPIS_ASPOR</name>
<protein>
    <recommendedName>
        <fullName>Triosephosphate isomerase</fullName>
        <shortName>TIM</shortName>
        <ecNumber>5.3.1.1</ecNumber>
    </recommendedName>
    <alternativeName>
        <fullName>Triose-phosphate isomerase</fullName>
    </alternativeName>
</protein>
<organism>
    <name type="scientific">Aspergillus oryzae (strain ATCC 42149 / RIB 40)</name>
    <name type="common">Yellow koji mold</name>
    <dbReference type="NCBI Taxonomy" id="510516"/>
    <lineage>
        <taxon>Eukaryota</taxon>
        <taxon>Fungi</taxon>
        <taxon>Dikarya</taxon>
        <taxon>Ascomycota</taxon>
        <taxon>Pezizomycotina</taxon>
        <taxon>Eurotiomycetes</taxon>
        <taxon>Eurotiomycetidae</taxon>
        <taxon>Eurotiales</taxon>
        <taxon>Aspergillaceae</taxon>
        <taxon>Aspergillus</taxon>
        <taxon>Aspergillus subgen. Circumdati</taxon>
    </lineage>
</organism>
<sequence length="251" mass="27414">MPRQFFVGGNFKMNGTAESITAIIKNLNEAKLDETTEVVVSPPALYLTLAQQVADEKKKVAVSSQNVFDKPNGAFTGEISVSQLQDAKIPWTIIGHSERRVILKETDEFIARKVKAAIDGGISVIFCIGETLEEREADKTIEVVTKQLNAAAKELTKEQWSKVVIAYEPVWAIGTGKVATTQQAQEVHAAIRKWLADAISPEASENTRIIYGGSVSEKNCRELAQERDVDGFLVGGASLKPAFVDIINARL</sequence>
<dbReference type="EC" id="5.3.1.1"/>
<dbReference type="EMBL" id="AB032273">
    <property type="protein sequence ID" value="BAB12233.1"/>
    <property type="molecule type" value="mRNA"/>
</dbReference>
<dbReference type="EMBL" id="BA000053">
    <property type="protein sequence ID" value="BAE63057.1"/>
    <property type="molecule type" value="Genomic_DNA"/>
</dbReference>
<dbReference type="RefSeq" id="XP_001824190.1">
    <property type="nucleotide sequence ID" value="XM_001824138.2"/>
</dbReference>
<dbReference type="SMR" id="Q9HGY8"/>
<dbReference type="STRING" id="510516.Q9HGY8"/>
<dbReference type="EnsemblFungi" id="BAE63057">
    <property type="protein sequence ID" value="BAE63057"/>
    <property type="gene ID" value="AO090120000493"/>
</dbReference>
<dbReference type="GeneID" id="5996449"/>
<dbReference type="KEGG" id="aor:AO090120000493"/>
<dbReference type="VEuPathDB" id="FungiDB:AO090120000493"/>
<dbReference type="HOGENOM" id="CLU_024251_2_0_1"/>
<dbReference type="OMA" id="NWKMHMT"/>
<dbReference type="OrthoDB" id="48366at5052"/>
<dbReference type="UniPathway" id="UPA00109">
    <property type="reaction ID" value="UER00189"/>
</dbReference>
<dbReference type="UniPathway" id="UPA00138"/>
<dbReference type="Proteomes" id="UP000006564">
    <property type="component" value="Chromosome 5"/>
</dbReference>
<dbReference type="GO" id="GO:0005829">
    <property type="term" value="C:cytosol"/>
    <property type="evidence" value="ECO:0007669"/>
    <property type="project" value="TreeGrafter"/>
</dbReference>
<dbReference type="GO" id="GO:0004807">
    <property type="term" value="F:triose-phosphate isomerase activity"/>
    <property type="evidence" value="ECO:0007669"/>
    <property type="project" value="UniProtKB-EC"/>
</dbReference>
<dbReference type="GO" id="GO:0006094">
    <property type="term" value="P:gluconeogenesis"/>
    <property type="evidence" value="ECO:0007669"/>
    <property type="project" value="UniProtKB-UniPathway"/>
</dbReference>
<dbReference type="GO" id="GO:0046166">
    <property type="term" value="P:glyceraldehyde-3-phosphate biosynthetic process"/>
    <property type="evidence" value="ECO:0007669"/>
    <property type="project" value="TreeGrafter"/>
</dbReference>
<dbReference type="GO" id="GO:0019563">
    <property type="term" value="P:glycerol catabolic process"/>
    <property type="evidence" value="ECO:0007669"/>
    <property type="project" value="TreeGrafter"/>
</dbReference>
<dbReference type="GO" id="GO:0006096">
    <property type="term" value="P:glycolytic process"/>
    <property type="evidence" value="ECO:0007669"/>
    <property type="project" value="UniProtKB-UniPathway"/>
</dbReference>
<dbReference type="CDD" id="cd00311">
    <property type="entry name" value="TIM"/>
    <property type="match status" value="1"/>
</dbReference>
<dbReference type="FunFam" id="3.20.20.70:FF:000025">
    <property type="entry name" value="Triosephosphate isomerase"/>
    <property type="match status" value="1"/>
</dbReference>
<dbReference type="Gene3D" id="3.20.20.70">
    <property type="entry name" value="Aldolase class I"/>
    <property type="match status" value="1"/>
</dbReference>
<dbReference type="HAMAP" id="MF_00147_B">
    <property type="entry name" value="TIM_B"/>
    <property type="match status" value="1"/>
</dbReference>
<dbReference type="InterPro" id="IPR013785">
    <property type="entry name" value="Aldolase_TIM"/>
</dbReference>
<dbReference type="InterPro" id="IPR035990">
    <property type="entry name" value="TIM_sf"/>
</dbReference>
<dbReference type="InterPro" id="IPR022896">
    <property type="entry name" value="TrioseP_Isoase_bac/euk"/>
</dbReference>
<dbReference type="InterPro" id="IPR000652">
    <property type="entry name" value="Triosephosphate_isomerase"/>
</dbReference>
<dbReference type="InterPro" id="IPR020861">
    <property type="entry name" value="Triosephosphate_isomerase_AS"/>
</dbReference>
<dbReference type="NCBIfam" id="TIGR00419">
    <property type="entry name" value="tim"/>
    <property type="match status" value="1"/>
</dbReference>
<dbReference type="PANTHER" id="PTHR21139">
    <property type="entry name" value="TRIOSEPHOSPHATE ISOMERASE"/>
    <property type="match status" value="1"/>
</dbReference>
<dbReference type="PANTHER" id="PTHR21139:SF41">
    <property type="entry name" value="TRIOSEPHOSPHATE ISOMERASE"/>
    <property type="match status" value="1"/>
</dbReference>
<dbReference type="Pfam" id="PF00121">
    <property type="entry name" value="TIM"/>
    <property type="match status" value="1"/>
</dbReference>
<dbReference type="SUPFAM" id="SSF51351">
    <property type="entry name" value="Triosephosphate isomerase (TIM)"/>
    <property type="match status" value="1"/>
</dbReference>
<dbReference type="PROSITE" id="PS00171">
    <property type="entry name" value="TIM_1"/>
    <property type="match status" value="1"/>
</dbReference>
<dbReference type="PROSITE" id="PS51440">
    <property type="entry name" value="TIM_2"/>
    <property type="match status" value="1"/>
</dbReference>
<proteinExistence type="evidence at transcript level"/>
<keyword id="KW-0312">Gluconeogenesis</keyword>
<keyword id="KW-0324">Glycolysis</keyword>
<keyword id="KW-0413">Isomerase</keyword>
<keyword id="KW-1185">Reference proteome</keyword>
<comment type="catalytic activity">
    <reaction>
        <text>D-glyceraldehyde 3-phosphate = dihydroxyacetone phosphate</text>
        <dbReference type="Rhea" id="RHEA:18585"/>
        <dbReference type="ChEBI" id="CHEBI:57642"/>
        <dbReference type="ChEBI" id="CHEBI:59776"/>
        <dbReference type="EC" id="5.3.1.1"/>
    </reaction>
</comment>
<comment type="pathway">
    <text>Carbohydrate biosynthesis; gluconeogenesis.</text>
</comment>
<comment type="pathway">
    <text>Carbohydrate degradation; glycolysis; D-glyceraldehyde 3-phosphate from glycerone phosphate: step 1/1.</text>
</comment>
<comment type="subunit">
    <text evidence="1">Homodimer.</text>
</comment>
<comment type="similarity">
    <text evidence="2">Belongs to the triosephosphate isomerase family.</text>
</comment>
<accession>Q9HGY8</accession>
<accession>Q2U5V8</accession>